<organism>
    <name type="scientific">Listeria monocytogenes serotype 4a (strain HCC23)</name>
    <dbReference type="NCBI Taxonomy" id="552536"/>
    <lineage>
        <taxon>Bacteria</taxon>
        <taxon>Bacillati</taxon>
        <taxon>Bacillota</taxon>
        <taxon>Bacilli</taxon>
        <taxon>Bacillales</taxon>
        <taxon>Listeriaceae</taxon>
        <taxon>Listeria</taxon>
    </lineage>
</organism>
<keyword id="KW-0963">Cytoplasm</keyword>
<keyword id="KW-0456">Lyase</keyword>
<keyword id="KW-0479">Metal-binding</keyword>
<keyword id="KW-0684">Rhamnose metabolism</keyword>
<keyword id="KW-0862">Zinc</keyword>
<gene>
    <name evidence="1" type="primary">rhaD</name>
    <name type="ordered locus">LMHCC_2674</name>
</gene>
<name>RHAD_LISMH</name>
<reference key="1">
    <citation type="journal article" date="2011" name="J. Bacteriol.">
        <title>Genome sequence of lineage III Listeria monocytogenes strain HCC23.</title>
        <authorList>
            <person name="Steele C.L."/>
            <person name="Donaldson J.R."/>
            <person name="Paul D."/>
            <person name="Banes M.M."/>
            <person name="Arick T."/>
            <person name="Bridges S.M."/>
            <person name="Lawrence M.L."/>
        </authorList>
    </citation>
    <scope>NUCLEOTIDE SEQUENCE [LARGE SCALE GENOMIC DNA]</scope>
    <source>
        <strain>HCC23</strain>
    </source>
</reference>
<dbReference type="EC" id="4.1.2.19" evidence="1"/>
<dbReference type="EMBL" id="CP001175">
    <property type="protein sequence ID" value="ACK41009.1"/>
    <property type="molecule type" value="Genomic_DNA"/>
</dbReference>
<dbReference type="RefSeq" id="WP_012582240.1">
    <property type="nucleotide sequence ID" value="NC_011660.1"/>
</dbReference>
<dbReference type="SMR" id="B8DCW3"/>
<dbReference type="KEGG" id="lmh:LMHCC_2674"/>
<dbReference type="HOGENOM" id="CLU_076831_0_0_9"/>
<dbReference type="UniPathway" id="UPA00541">
    <property type="reaction ID" value="UER00603"/>
</dbReference>
<dbReference type="GO" id="GO:0005829">
    <property type="term" value="C:cytosol"/>
    <property type="evidence" value="ECO:0007669"/>
    <property type="project" value="TreeGrafter"/>
</dbReference>
<dbReference type="GO" id="GO:0046872">
    <property type="term" value="F:metal ion binding"/>
    <property type="evidence" value="ECO:0007669"/>
    <property type="project" value="UniProtKB-KW"/>
</dbReference>
<dbReference type="GO" id="GO:0008994">
    <property type="term" value="F:rhamnulose-1-phosphate aldolase activity"/>
    <property type="evidence" value="ECO:0007669"/>
    <property type="project" value="UniProtKB-UniRule"/>
</dbReference>
<dbReference type="GO" id="GO:0019323">
    <property type="term" value="P:pentose catabolic process"/>
    <property type="evidence" value="ECO:0007669"/>
    <property type="project" value="TreeGrafter"/>
</dbReference>
<dbReference type="GO" id="GO:0019301">
    <property type="term" value="P:rhamnose catabolic process"/>
    <property type="evidence" value="ECO:0007669"/>
    <property type="project" value="UniProtKB-UniRule"/>
</dbReference>
<dbReference type="Gene3D" id="3.40.225.10">
    <property type="entry name" value="Class II aldolase/adducin N-terminal domain"/>
    <property type="match status" value="1"/>
</dbReference>
<dbReference type="HAMAP" id="MF_00770">
    <property type="entry name" value="RhaD"/>
    <property type="match status" value="1"/>
</dbReference>
<dbReference type="InterPro" id="IPR050197">
    <property type="entry name" value="Aldolase_class_II_sugar_metab"/>
</dbReference>
<dbReference type="InterPro" id="IPR001303">
    <property type="entry name" value="Aldolase_II/adducin_N"/>
</dbReference>
<dbReference type="InterPro" id="IPR036409">
    <property type="entry name" value="Aldolase_II/adducin_N_sf"/>
</dbReference>
<dbReference type="InterPro" id="IPR013447">
    <property type="entry name" value="Rhamnulose-1-P_Aldolase"/>
</dbReference>
<dbReference type="NCBIfam" id="NF002963">
    <property type="entry name" value="PRK03634.1"/>
    <property type="match status" value="1"/>
</dbReference>
<dbReference type="NCBIfam" id="TIGR02624">
    <property type="entry name" value="rhamnu_1P_ald"/>
    <property type="match status" value="1"/>
</dbReference>
<dbReference type="PANTHER" id="PTHR22789:SF0">
    <property type="entry name" value="3-OXO-TETRONATE 4-PHOSPHATE DECARBOXYLASE-RELATED"/>
    <property type="match status" value="1"/>
</dbReference>
<dbReference type="PANTHER" id="PTHR22789">
    <property type="entry name" value="FUCULOSE PHOSPHATE ALDOLASE"/>
    <property type="match status" value="1"/>
</dbReference>
<dbReference type="Pfam" id="PF00596">
    <property type="entry name" value="Aldolase_II"/>
    <property type="match status" value="1"/>
</dbReference>
<dbReference type="SMART" id="SM01007">
    <property type="entry name" value="Aldolase_II"/>
    <property type="match status" value="1"/>
</dbReference>
<dbReference type="SUPFAM" id="SSF53639">
    <property type="entry name" value="AraD/HMP-PK domain-like"/>
    <property type="match status" value="1"/>
</dbReference>
<protein>
    <recommendedName>
        <fullName evidence="1">Rhamnulose-1-phosphate aldolase</fullName>
        <ecNumber evidence="1">4.1.2.19</ecNumber>
    </recommendedName>
</protein>
<evidence type="ECO:0000255" key="1">
    <source>
        <dbReference type="HAMAP-Rule" id="MF_00770"/>
    </source>
</evidence>
<proteinExistence type="inferred from homology"/>
<feature type="chain" id="PRO_1000148451" description="Rhamnulose-1-phosphate aldolase">
    <location>
        <begin position="1"/>
        <end position="273"/>
    </location>
</feature>
<feature type="active site" evidence="1">
    <location>
        <position position="117"/>
    </location>
</feature>
<feature type="binding site" evidence="1">
    <location>
        <position position="140"/>
    </location>
    <ligand>
        <name>Zn(2+)</name>
        <dbReference type="ChEBI" id="CHEBI:29105"/>
    </ligand>
</feature>
<feature type="binding site" evidence="1">
    <location>
        <position position="142"/>
    </location>
    <ligand>
        <name>Zn(2+)</name>
        <dbReference type="ChEBI" id="CHEBI:29105"/>
    </ligand>
</feature>
<feature type="binding site" evidence="1">
    <location>
        <position position="211"/>
    </location>
    <ligand>
        <name>Zn(2+)</name>
        <dbReference type="ChEBI" id="CHEBI:29105"/>
    </ligand>
</feature>
<accession>B8DCW3</accession>
<comment type="function">
    <text evidence="1">Catalyzes the reversible cleavage of L-rhamnulose-1-phosphate to dihydroxyacetone phosphate (DHAP) and L-lactaldehyde.</text>
</comment>
<comment type="catalytic activity">
    <reaction evidence="1">
        <text>L-rhamnulose 1-phosphate = (S)-lactaldehyde + dihydroxyacetone phosphate</text>
        <dbReference type="Rhea" id="RHEA:19689"/>
        <dbReference type="ChEBI" id="CHEBI:18041"/>
        <dbReference type="ChEBI" id="CHEBI:57642"/>
        <dbReference type="ChEBI" id="CHEBI:58313"/>
        <dbReference type="EC" id="4.1.2.19"/>
    </reaction>
</comment>
<comment type="cofactor">
    <cofactor evidence="1">
        <name>Zn(2+)</name>
        <dbReference type="ChEBI" id="CHEBI:29105"/>
    </cofactor>
    <text evidence="1">Binds 1 zinc ion per subunit.</text>
</comment>
<comment type="pathway">
    <text evidence="1">Carbohydrate degradation; L-rhamnose degradation; glycerone phosphate from L-rhamnose: step 3/3.</text>
</comment>
<comment type="subcellular location">
    <subcellularLocation>
        <location evidence="1">Cytoplasm</location>
    </subcellularLocation>
</comment>
<comment type="similarity">
    <text evidence="1">Belongs to the aldolase class II family. RhaD subfamily.</text>
</comment>
<sequence>MTKDIMDAVFIKEMAKTTSNLYRLGWDERNGGNITYLLDEKEVVEYLDVKQIIRTIPMDFDGEKLAGKYFLVTGSGKYFKNVEEAPAVNLGVIQVSEDGKAVHLLWGYTDGGLPTSELPAHFMSHIARLSVDPENRVVMHCHATHLLAMTFTHELTEREFTRTLWQMCTECLVVFPEGVGIIPWLVPGTNEIGEATSEKMKENRLIVWPHHGIYGAGKSMDETFGLIETAEKAAEVYTIVMSQGGIKQAITDEQLKALGERFSVEAKAGYLNN</sequence>